<name>METK_GLAP5</name>
<evidence type="ECO:0000255" key="1">
    <source>
        <dbReference type="HAMAP-Rule" id="MF_00086"/>
    </source>
</evidence>
<gene>
    <name evidence="1" type="primary">metK</name>
    <name type="ordered locus">HAPS_0500</name>
</gene>
<feature type="chain" id="PRO_1000196715" description="S-adenosylmethionine synthase">
    <location>
        <begin position="1"/>
        <end position="382"/>
    </location>
</feature>
<feature type="region of interest" description="Flexible loop" evidence="1">
    <location>
        <begin position="99"/>
        <end position="109"/>
    </location>
</feature>
<feature type="binding site" description="in other chain" evidence="1">
    <location>
        <position position="15"/>
    </location>
    <ligand>
        <name>ATP</name>
        <dbReference type="ChEBI" id="CHEBI:30616"/>
        <note>ligand shared between two neighboring subunits</note>
    </ligand>
</feature>
<feature type="binding site" evidence="1">
    <location>
        <position position="17"/>
    </location>
    <ligand>
        <name>Mg(2+)</name>
        <dbReference type="ChEBI" id="CHEBI:18420"/>
    </ligand>
</feature>
<feature type="binding site" evidence="1">
    <location>
        <position position="43"/>
    </location>
    <ligand>
        <name>K(+)</name>
        <dbReference type="ChEBI" id="CHEBI:29103"/>
    </ligand>
</feature>
<feature type="binding site" description="in other chain" evidence="1">
    <location>
        <position position="56"/>
    </location>
    <ligand>
        <name>L-methionine</name>
        <dbReference type="ChEBI" id="CHEBI:57844"/>
        <note>ligand shared between two neighboring subunits</note>
    </ligand>
</feature>
<feature type="binding site" description="in other chain" evidence="1">
    <location>
        <position position="99"/>
    </location>
    <ligand>
        <name>L-methionine</name>
        <dbReference type="ChEBI" id="CHEBI:57844"/>
        <note>ligand shared between two neighboring subunits</note>
    </ligand>
</feature>
<feature type="binding site" description="in other chain" evidence="1">
    <location>
        <begin position="164"/>
        <end position="166"/>
    </location>
    <ligand>
        <name>ATP</name>
        <dbReference type="ChEBI" id="CHEBI:30616"/>
        <note>ligand shared between two neighboring subunits</note>
    </ligand>
</feature>
<feature type="binding site" description="in other chain" evidence="1">
    <location>
        <begin position="230"/>
        <end position="231"/>
    </location>
    <ligand>
        <name>ATP</name>
        <dbReference type="ChEBI" id="CHEBI:30616"/>
        <note>ligand shared between two neighboring subunits</note>
    </ligand>
</feature>
<feature type="binding site" evidence="1">
    <location>
        <position position="239"/>
    </location>
    <ligand>
        <name>ATP</name>
        <dbReference type="ChEBI" id="CHEBI:30616"/>
        <note>ligand shared between two neighboring subunits</note>
    </ligand>
</feature>
<feature type="binding site" evidence="1">
    <location>
        <position position="239"/>
    </location>
    <ligand>
        <name>L-methionine</name>
        <dbReference type="ChEBI" id="CHEBI:57844"/>
        <note>ligand shared between two neighboring subunits</note>
    </ligand>
</feature>
<feature type="binding site" description="in other chain" evidence="1">
    <location>
        <begin position="245"/>
        <end position="246"/>
    </location>
    <ligand>
        <name>ATP</name>
        <dbReference type="ChEBI" id="CHEBI:30616"/>
        <note>ligand shared between two neighboring subunits</note>
    </ligand>
</feature>
<feature type="binding site" evidence="1">
    <location>
        <position position="262"/>
    </location>
    <ligand>
        <name>ATP</name>
        <dbReference type="ChEBI" id="CHEBI:30616"/>
        <note>ligand shared between two neighboring subunits</note>
    </ligand>
</feature>
<feature type="binding site" evidence="1">
    <location>
        <position position="266"/>
    </location>
    <ligand>
        <name>ATP</name>
        <dbReference type="ChEBI" id="CHEBI:30616"/>
        <note>ligand shared between two neighboring subunits</note>
    </ligand>
</feature>
<feature type="binding site" description="in other chain" evidence="1">
    <location>
        <position position="270"/>
    </location>
    <ligand>
        <name>L-methionine</name>
        <dbReference type="ChEBI" id="CHEBI:57844"/>
        <note>ligand shared between two neighboring subunits</note>
    </ligand>
</feature>
<dbReference type="EC" id="2.5.1.6" evidence="1"/>
<dbReference type="EMBL" id="CP001321">
    <property type="protein sequence ID" value="ACL32164.1"/>
    <property type="molecule type" value="Genomic_DNA"/>
</dbReference>
<dbReference type="RefSeq" id="WP_012621761.1">
    <property type="nucleotide sequence ID" value="NC_011852.1"/>
</dbReference>
<dbReference type="SMR" id="B8F4B2"/>
<dbReference type="STRING" id="557723.HAPS_0500"/>
<dbReference type="KEGG" id="hap:HAPS_0500"/>
<dbReference type="PATRIC" id="fig|557723.8.peg.507"/>
<dbReference type="HOGENOM" id="CLU_041802_1_1_6"/>
<dbReference type="UniPathway" id="UPA00315">
    <property type="reaction ID" value="UER00080"/>
</dbReference>
<dbReference type="Proteomes" id="UP000006743">
    <property type="component" value="Chromosome"/>
</dbReference>
<dbReference type="GO" id="GO:0005737">
    <property type="term" value="C:cytoplasm"/>
    <property type="evidence" value="ECO:0007669"/>
    <property type="project" value="UniProtKB-SubCell"/>
</dbReference>
<dbReference type="GO" id="GO:0005524">
    <property type="term" value="F:ATP binding"/>
    <property type="evidence" value="ECO:0007669"/>
    <property type="project" value="UniProtKB-UniRule"/>
</dbReference>
<dbReference type="GO" id="GO:0000287">
    <property type="term" value="F:magnesium ion binding"/>
    <property type="evidence" value="ECO:0007669"/>
    <property type="project" value="UniProtKB-UniRule"/>
</dbReference>
<dbReference type="GO" id="GO:0004478">
    <property type="term" value="F:methionine adenosyltransferase activity"/>
    <property type="evidence" value="ECO:0007669"/>
    <property type="project" value="UniProtKB-UniRule"/>
</dbReference>
<dbReference type="GO" id="GO:0006730">
    <property type="term" value="P:one-carbon metabolic process"/>
    <property type="evidence" value="ECO:0007669"/>
    <property type="project" value="UniProtKB-KW"/>
</dbReference>
<dbReference type="GO" id="GO:0006556">
    <property type="term" value="P:S-adenosylmethionine biosynthetic process"/>
    <property type="evidence" value="ECO:0007669"/>
    <property type="project" value="UniProtKB-UniRule"/>
</dbReference>
<dbReference type="CDD" id="cd18079">
    <property type="entry name" value="S-AdoMet_synt"/>
    <property type="match status" value="1"/>
</dbReference>
<dbReference type="FunFam" id="3.30.300.10:FF:000003">
    <property type="entry name" value="S-adenosylmethionine synthase"/>
    <property type="match status" value="1"/>
</dbReference>
<dbReference type="Gene3D" id="3.30.300.10">
    <property type="match status" value="3"/>
</dbReference>
<dbReference type="HAMAP" id="MF_00086">
    <property type="entry name" value="S_AdoMet_synth1"/>
    <property type="match status" value="1"/>
</dbReference>
<dbReference type="InterPro" id="IPR022631">
    <property type="entry name" value="ADOMET_SYNTHASE_CS"/>
</dbReference>
<dbReference type="InterPro" id="IPR022630">
    <property type="entry name" value="S-AdoMet_synt_C"/>
</dbReference>
<dbReference type="InterPro" id="IPR022629">
    <property type="entry name" value="S-AdoMet_synt_central"/>
</dbReference>
<dbReference type="InterPro" id="IPR022628">
    <property type="entry name" value="S-AdoMet_synt_N"/>
</dbReference>
<dbReference type="InterPro" id="IPR002133">
    <property type="entry name" value="S-AdoMet_synthetase"/>
</dbReference>
<dbReference type="InterPro" id="IPR022636">
    <property type="entry name" value="S-AdoMet_synthetase_sfam"/>
</dbReference>
<dbReference type="NCBIfam" id="TIGR01034">
    <property type="entry name" value="metK"/>
    <property type="match status" value="1"/>
</dbReference>
<dbReference type="PANTHER" id="PTHR11964">
    <property type="entry name" value="S-ADENOSYLMETHIONINE SYNTHETASE"/>
    <property type="match status" value="1"/>
</dbReference>
<dbReference type="Pfam" id="PF02773">
    <property type="entry name" value="S-AdoMet_synt_C"/>
    <property type="match status" value="1"/>
</dbReference>
<dbReference type="Pfam" id="PF02772">
    <property type="entry name" value="S-AdoMet_synt_M"/>
    <property type="match status" value="1"/>
</dbReference>
<dbReference type="Pfam" id="PF00438">
    <property type="entry name" value="S-AdoMet_synt_N"/>
    <property type="match status" value="1"/>
</dbReference>
<dbReference type="PIRSF" id="PIRSF000497">
    <property type="entry name" value="MAT"/>
    <property type="match status" value="1"/>
</dbReference>
<dbReference type="SUPFAM" id="SSF55973">
    <property type="entry name" value="S-adenosylmethionine synthetase"/>
    <property type="match status" value="3"/>
</dbReference>
<dbReference type="PROSITE" id="PS00376">
    <property type="entry name" value="ADOMET_SYNTHASE_1"/>
    <property type="match status" value="1"/>
</dbReference>
<dbReference type="PROSITE" id="PS00377">
    <property type="entry name" value="ADOMET_SYNTHASE_2"/>
    <property type="match status" value="1"/>
</dbReference>
<proteinExistence type="inferred from homology"/>
<reference key="1">
    <citation type="journal article" date="2009" name="J. Bacteriol.">
        <title>Complete genome sequence of Haemophilus parasuis SH0165.</title>
        <authorList>
            <person name="Yue M."/>
            <person name="Yang F."/>
            <person name="Yang J."/>
            <person name="Bei W."/>
            <person name="Cai X."/>
            <person name="Chen L."/>
            <person name="Dong J."/>
            <person name="Zhou R."/>
            <person name="Jin M."/>
            <person name="Jin Q."/>
            <person name="Chen H."/>
        </authorList>
    </citation>
    <scope>NUCLEOTIDE SEQUENCE [LARGE SCALE GENOMIC DNA]</scope>
    <source>
        <strain>SH0165</strain>
    </source>
</reference>
<comment type="function">
    <text evidence="1">Catalyzes the formation of S-adenosylmethionine (AdoMet) from methionine and ATP. The overall synthetic reaction is composed of two sequential steps, AdoMet formation and the subsequent tripolyphosphate hydrolysis which occurs prior to release of AdoMet from the enzyme.</text>
</comment>
<comment type="catalytic activity">
    <reaction evidence="1">
        <text>L-methionine + ATP + H2O = S-adenosyl-L-methionine + phosphate + diphosphate</text>
        <dbReference type="Rhea" id="RHEA:21080"/>
        <dbReference type="ChEBI" id="CHEBI:15377"/>
        <dbReference type="ChEBI" id="CHEBI:30616"/>
        <dbReference type="ChEBI" id="CHEBI:33019"/>
        <dbReference type="ChEBI" id="CHEBI:43474"/>
        <dbReference type="ChEBI" id="CHEBI:57844"/>
        <dbReference type="ChEBI" id="CHEBI:59789"/>
        <dbReference type="EC" id="2.5.1.6"/>
    </reaction>
</comment>
<comment type="cofactor">
    <cofactor evidence="1">
        <name>Mg(2+)</name>
        <dbReference type="ChEBI" id="CHEBI:18420"/>
    </cofactor>
    <text evidence="1">Binds 2 divalent ions per subunit.</text>
</comment>
<comment type="cofactor">
    <cofactor evidence="1">
        <name>K(+)</name>
        <dbReference type="ChEBI" id="CHEBI:29103"/>
    </cofactor>
    <text evidence="1">Binds 1 potassium ion per subunit.</text>
</comment>
<comment type="pathway">
    <text evidence="1">Amino-acid biosynthesis; S-adenosyl-L-methionine biosynthesis; S-adenosyl-L-methionine from L-methionine: step 1/1.</text>
</comment>
<comment type="subunit">
    <text evidence="1">Homotetramer; dimer of dimers.</text>
</comment>
<comment type="subcellular location">
    <subcellularLocation>
        <location evidence="1">Cytoplasm</location>
    </subcellularLocation>
</comment>
<comment type="similarity">
    <text evidence="1">Belongs to the AdoMet synthase family.</text>
</comment>
<organism>
    <name type="scientific">Glaesserella parasuis serovar 5 (strain SH0165)</name>
    <name type="common">Haemophilus parasuis</name>
    <dbReference type="NCBI Taxonomy" id="557723"/>
    <lineage>
        <taxon>Bacteria</taxon>
        <taxon>Pseudomonadati</taxon>
        <taxon>Pseudomonadota</taxon>
        <taxon>Gammaproteobacteria</taxon>
        <taxon>Pasteurellales</taxon>
        <taxon>Pasteurellaceae</taxon>
        <taxon>Glaesserella</taxon>
    </lineage>
</organism>
<sequence length="382" mass="41987">MAINLFTSESVSEGHPDKIADQISDAVLDEILKQDPKARVACETYVKTGMALVGGEITTSAWVDIENLTRQVICDIGYTHSDMGFDAHSCAVLNAIGKQSPDINQGVDRANPLEQGAGDQGIMFGYATNETEVLMPAPITYAHRLMEQQAKVRKSGKLDWLRPDAKSQLTFIYEDNKIKGIDTVVLSTQHAEHVDQKTVFEGVMEEIIKPILPSEWLSQNTKYFINPTGRFVIGGPMGDCGLTGRKIIVDTYGGAARHGGGAFSGKDPSKVDRSAAYAARYVAKNIVAAGLADRCEIQLSYAIGIAEPTSIMVETFGTGKVSNEVFVRLVREHFDLRPYGLIKMLDLIRPIYRETAAYGHFGREHFPWEKTDKAEALKSALR</sequence>
<accession>B8F4B2</accession>
<keyword id="KW-0067">ATP-binding</keyword>
<keyword id="KW-0963">Cytoplasm</keyword>
<keyword id="KW-0460">Magnesium</keyword>
<keyword id="KW-0479">Metal-binding</keyword>
<keyword id="KW-0547">Nucleotide-binding</keyword>
<keyword id="KW-0554">One-carbon metabolism</keyword>
<keyword id="KW-0630">Potassium</keyword>
<keyword id="KW-1185">Reference proteome</keyword>
<keyword id="KW-0808">Transferase</keyword>
<protein>
    <recommendedName>
        <fullName evidence="1">S-adenosylmethionine synthase</fullName>
        <shortName evidence="1">AdoMet synthase</shortName>
        <ecNumber evidence="1">2.5.1.6</ecNumber>
    </recommendedName>
    <alternativeName>
        <fullName evidence="1">MAT</fullName>
    </alternativeName>
    <alternativeName>
        <fullName evidence="1">Methionine adenosyltransferase</fullName>
    </alternativeName>
</protein>